<gene>
    <name type="primary">gua1</name>
    <name type="ORF">SPBC2F12.14c</name>
</gene>
<protein>
    <recommendedName>
        <fullName evidence="1">Inosine-5'-monophosphate dehydrogenase</fullName>
        <shortName evidence="1">IMP dehydrogenase</shortName>
        <shortName evidence="1">IMPD</shortName>
        <shortName evidence="1">IMPDH</shortName>
        <ecNumber evidence="1">1.1.1.205</ecNumber>
    </recommendedName>
</protein>
<organism>
    <name type="scientific">Schizosaccharomyces pombe (strain 972 / ATCC 24843)</name>
    <name type="common">Fission yeast</name>
    <dbReference type="NCBI Taxonomy" id="284812"/>
    <lineage>
        <taxon>Eukaryota</taxon>
        <taxon>Fungi</taxon>
        <taxon>Dikarya</taxon>
        <taxon>Ascomycota</taxon>
        <taxon>Taphrinomycotina</taxon>
        <taxon>Schizosaccharomycetes</taxon>
        <taxon>Schizosaccharomycetales</taxon>
        <taxon>Schizosaccharomycetaceae</taxon>
        <taxon>Schizosaccharomyces</taxon>
    </lineage>
</organism>
<comment type="function">
    <text evidence="1">Catalyzes the conversion of inosine 5'-phosphate (IMP) to xanthosine 5'-phosphate (XMP), the first committed and rate-limiting step in the de novo synthesis of guanine nucleotides, and therefore plays an important role in the regulation of cell growth.</text>
</comment>
<comment type="catalytic activity">
    <reaction evidence="1">
        <text>IMP + NAD(+) + H2O = XMP + NADH + H(+)</text>
        <dbReference type="Rhea" id="RHEA:11708"/>
        <dbReference type="ChEBI" id="CHEBI:15377"/>
        <dbReference type="ChEBI" id="CHEBI:15378"/>
        <dbReference type="ChEBI" id="CHEBI:57464"/>
        <dbReference type="ChEBI" id="CHEBI:57540"/>
        <dbReference type="ChEBI" id="CHEBI:57945"/>
        <dbReference type="ChEBI" id="CHEBI:58053"/>
        <dbReference type="EC" id="1.1.1.205"/>
    </reaction>
</comment>
<comment type="cofactor">
    <cofactor evidence="1">
        <name>K(+)</name>
        <dbReference type="ChEBI" id="CHEBI:29103"/>
    </cofactor>
</comment>
<comment type="activity regulation">
    <text evidence="1">Mycophenolic acid (MPA) is a non-competitive inhibitor that prevents formation of the closed enzyme conformation by binding to the same site as the amobile flap. In contrast, mizoribine monophosphate (MZP) is a competitive inhibitor that induces the closed conformation. MPA is a potent inhibitor of mammalian IMPDHs but a poor inhibitor of the bacterial enzymes. MZP is a more potent inhibitor of bacterial IMPDH.</text>
</comment>
<comment type="pathway">
    <text evidence="1">Purine metabolism; XMP biosynthesis via de novo pathway; XMP from IMP: step 1/1.</text>
</comment>
<comment type="subunit">
    <text evidence="1">Homotetramer.</text>
</comment>
<comment type="subcellular location">
    <subcellularLocation>
        <location evidence="1 2">Cytoplasm</location>
    </subcellularLocation>
</comment>
<comment type="similarity">
    <text evidence="1">Belongs to the IMPDH/GMPR family.</text>
</comment>
<accession>O14344</accession>
<accession>P78758</accession>
<accession>Q9P3X8</accession>
<reference key="1">
    <citation type="journal article" date="2002" name="Nature">
        <title>The genome sequence of Schizosaccharomyces pombe.</title>
        <authorList>
            <person name="Wood V."/>
            <person name="Gwilliam R."/>
            <person name="Rajandream M.A."/>
            <person name="Lyne M.H."/>
            <person name="Lyne R."/>
            <person name="Stewart A."/>
            <person name="Sgouros J.G."/>
            <person name="Peat N."/>
            <person name="Hayles J."/>
            <person name="Baker S.G."/>
            <person name="Basham D."/>
            <person name="Bowman S."/>
            <person name="Brooks K."/>
            <person name="Brown D."/>
            <person name="Brown S."/>
            <person name="Chillingworth T."/>
            <person name="Churcher C.M."/>
            <person name="Collins M."/>
            <person name="Connor R."/>
            <person name="Cronin A."/>
            <person name="Davis P."/>
            <person name="Feltwell T."/>
            <person name="Fraser A."/>
            <person name="Gentles S."/>
            <person name="Goble A."/>
            <person name="Hamlin N."/>
            <person name="Harris D.E."/>
            <person name="Hidalgo J."/>
            <person name="Hodgson G."/>
            <person name="Holroyd S."/>
            <person name="Hornsby T."/>
            <person name="Howarth S."/>
            <person name="Huckle E.J."/>
            <person name="Hunt S."/>
            <person name="Jagels K."/>
            <person name="James K.D."/>
            <person name="Jones L."/>
            <person name="Jones M."/>
            <person name="Leather S."/>
            <person name="McDonald S."/>
            <person name="McLean J."/>
            <person name="Mooney P."/>
            <person name="Moule S."/>
            <person name="Mungall K.L."/>
            <person name="Murphy L.D."/>
            <person name="Niblett D."/>
            <person name="Odell C."/>
            <person name="Oliver K."/>
            <person name="O'Neil S."/>
            <person name="Pearson D."/>
            <person name="Quail M.A."/>
            <person name="Rabbinowitsch E."/>
            <person name="Rutherford K.M."/>
            <person name="Rutter S."/>
            <person name="Saunders D."/>
            <person name="Seeger K."/>
            <person name="Sharp S."/>
            <person name="Skelton J."/>
            <person name="Simmonds M.N."/>
            <person name="Squares R."/>
            <person name="Squares S."/>
            <person name="Stevens K."/>
            <person name="Taylor K."/>
            <person name="Taylor R.G."/>
            <person name="Tivey A."/>
            <person name="Walsh S.V."/>
            <person name="Warren T."/>
            <person name="Whitehead S."/>
            <person name="Woodward J.R."/>
            <person name="Volckaert G."/>
            <person name="Aert R."/>
            <person name="Robben J."/>
            <person name="Grymonprez B."/>
            <person name="Weltjens I."/>
            <person name="Vanstreels E."/>
            <person name="Rieger M."/>
            <person name="Schaefer M."/>
            <person name="Mueller-Auer S."/>
            <person name="Gabel C."/>
            <person name="Fuchs M."/>
            <person name="Duesterhoeft A."/>
            <person name="Fritzc C."/>
            <person name="Holzer E."/>
            <person name="Moestl D."/>
            <person name="Hilbert H."/>
            <person name="Borzym K."/>
            <person name="Langer I."/>
            <person name="Beck A."/>
            <person name="Lehrach H."/>
            <person name="Reinhardt R."/>
            <person name="Pohl T.M."/>
            <person name="Eger P."/>
            <person name="Zimmermann W."/>
            <person name="Wedler H."/>
            <person name="Wambutt R."/>
            <person name="Purnelle B."/>
            <person name="Goffeau A."/>
            <person name="Cadieu E."/>
            <person name="Dreano S."/>
            <person name="Gloux S."/>
            <person name="Lelaure V."/>
            <person name="Mottier S."/>
            <person name="Galibert F."/>
            <person name="Aves S.J."/>
            <person name="Xiang Z."/>
            <person name="Hunt C."/>
            <person name="Moore K."/>
            <person name="Hurst S.M."/>
            <person name="Lucas M."/>
            <person name="Rochet M."/>
            <person name="Gaillardin C."/>
            <person name="Tallada V.A."/>
            <person name="Garzon A."/>
            <person name="Thode G."/>
            <person name="Daga R.R."/>
            <person name="Cruzado L."/>
            <person name="Jimenez J."/>
            <person name="Sanchez M."/>
            <person name="del Rey F."/>
            <person name="Benito J."/>
            <person name="Dominguez A."/>
            <person name="Revuelta J.L."/>
            <person name="Moreno S."/>
            <person name="Armstrong J."/>
            <person name="Forsburg S.L."/>
            <person name="Cerutti L."/>
            <person name="Lowe T."/>
            <person name="McCombie W.R."/>
            <person name="Paulsen I."/>
            <person name="Potashkin J."/>
            <person name="Shpakovski G.V."/>
            <person name="Ussery D."/>
            <person name="Barrell B.G."/>
            <person name="Nurse P."/>
        </authorList>
    </citation>
    <scope>NUCLEOTIDE SEQUENCE [LARGE SCALE GENOMIC DNA]</scope>
    <source>
        <strain>972 / ATCC 24843</strain>
    </source>
</reference>
<reference key="2">
    <citation type="journal article" date="1997" name="DNA Res.">
        <title>Identification of open reading frames in Schizosaccharomyces pombe cDNAs.</title>
        <authorList>
            <person name="Yoshioka S."/>
            <person name="Kato K."/>
            <person name="Nakai K."/>
            <person name="Okayama H."/>
            <person name="Nojima H."/>
        </authorList>
    </citation>
    <scope>NUCLEOTIDE SEQUENCE [LARGE SCALE MRNA] OF 62-293</scope>
    <source>
        <strain>PR745</strain>
    </source>
</reference>
<reference key="3">
    <citation type="submission" date="2000-07" db="EMBL/GenBank/DDBJ databases">
        <authorList>
            <person name="Karaer S."/>
            <person name="Topal Sarykaya A."/>
            <person name="Temizkan G."/>
        </authorList>
    </citation>
    <scope>NUCLEOTIDE SEQUENCE [GENOMIC DNA] OF 378-524</scope>
    <source>
        <strain>972 / ATCC 24843</strain>
    </source>
</reference>
<reference key="4">
    <citation type="journal article" date="2006" name="Nat. Biotechnol.">
        <title>ORFeome cloning and global analysis of protein localization in the fission yeast Schizosaccharomyces pombe.</title>
        <authorList>
            <person name="Matsuyama A."/>
            <person name="Arai R."/>
            <person name="Yashiroda Y."/>
            <person name="Shirai A."/>
            <person name="Kamata A."/>
            <person name="Sekido S."/>
            <person name="Kobayashi Y."/>
            <person name="Hashimoto A."/>
            <person name="Hamamoto M."/>
            <person name="Hiraoka Y."/>
            <person name="Horinouchi S."/>
            <person name="Yoshida M."/>
        </authorList>
    </citation>
    <scope>SUBCELLULAR LOCATION [LARGE SCALE ANALYSIS]</scope>
</reference>
<evidence type="ECO:0000255" key="1">
    <source>
        <dbReference type="HAMAP-Rule" id="MF_03156"/>
    </source>
</evidence>
<evidence type="ECO:0000269" key="2">
    <source>
    </source>
</evidence>
<evidence type="ECO:0000305" key="3"/>
<keyword id="KW-0129">CBS domain</keyword>
<keyword id="KW-0963">Cytoplasm</keyword>
<keyword id="KW-0332">GMP biosynthesis</keyword>
<keyword id="KW-0479">Metal-binding</keyword>
<keyword id="KW-0520">NAD</keyword>
<keyword id="KW-0560">Oxidoreductase</keyword>
<keyword id="KW-0630">Potassium</keyword>
<keyword id="KW-0658">Purine biosynthesis</keyword>
<keyword id="KW-1185">Reference proteome</keyword>
<keyword id="KW-0677">Repeat</keyword>
<proteinExistence type="evidence at transcript level"/>
<name>IMDH_SCHPO</name>
<feature type="chain" id="PRO_0000093680" description="Inosine-5'-monophosphate dehydrogenase">
    <location>
        <begin position="1"/>
        <end position="524"/>
    </location>
</feature>
<feature type="domain" description="CBS 1" evidence="1">
    <location>
        <begin position="121"/>
        <end position="180"/>
    </location>
</feature>
<feature type="domain" description="CBS 2" evidence="1">
    <location>
        <begin position="184"/>
        <end position="242"/>
    </location>
</feature>
<feature type="active site" description="Thioimidate intermediate" evidence="1">
    <location>
        <position position="337"/>
    </location>
</feature>
<feature type="active site" description="Proton acceptor" evidence="1">
    <location>
        <position position="439"/>
    </location>
</feature>
<feature type="binding site" evidence="1">
    <location>
        <begin position="280"/>
        <end position="282"/>
    </location>
    <ligand>
        <name>NAD(+)</name>
        <dbReference type="ChEBI" id="CHEBI:57540"/>
    </ligand>
</feature>
<feature type="binding site" evidence="1">
    <location>
        <begin position="330"/>
        <end position="332"/>
    </location>
    <ligand>
        <name>NAD(+)</name>
        <dbReference type="ChEBI" id="CHEBI:57540"/>
    </ligand>
</feature>
<feature type="binding site" description="in other chain" evidence="1">
    <location>
        <position position="332"/>
    </location>
    <ligand>
        <name>K(+)</name>
        <dbReference type="ChEBI" id="CHEBI:29103"/>
        <note>ligand shared between two tetrameric partners</note>
    </ligand>
</feature>
<feature type="binding site" description="in other chain" evidence="1">
    <location>
        <position position="334"/>
    </location>
    <ligand>
        <name>K(+)</name>
        <dbReference type="ChEBI" id="CHEBI:29103"/>
        <note>ligand shared between two tetrameric partners</note>
    </ligand>
</feature>
<feature type="binding site" evidence="1">
    <location>
        <position position="335"/>
    </location>
    <ligand>
        <name>IMP</name>
        <dbReference type="ChEBI" id="CHEBI:58053"/>
    </ligand>
</feature>
<feature type="binding site" description="in other chain" evidence="1">
    <location>
        <position position="337"/>
    </location>
    <ligand>
        <name>K(+)</name>
        <dbReference type="ChEBI" id="CHEBI:29103"/>
        <note>ligand shared between two tetrameric partners</note>
    </ligand>
</feature>
<feature type="binding site" evidence="1">
    <location>
        <begin position="370"/>
        <end position="372"/>
    </location>
    <ligand>
        <name>IMP</name>
        <dbReference type="ChEBI" id="CHEBI:58053"/>
    </ligand>
</feature>
<feature type="binding site" evidence="1">
    <location>
        <begin position="393"/>
        <end position="394"/>
    </location>
    <ligand>
        <name>IMP</name>
        <dbReference type="ChEBI" id="CHEBI:58053"/>
    </ligand>
</feature>
<feature type="binding site" evidence="1">
    <location>
        <begin position="417"/>
        <end position="421"/>
    </location>
    <ligand>
        <name>IMP</name>
        <dbReference type="ChEBI" id="CHEBI:58053"/>
    </ligand>
</feature>
<feature type="binding site" evidence="1">
    <location>
        <position position="451"/>
    </location>
    <ligand>
        <name>IMP</name>
        <dbReference type="ChEBI" id="CHEBI:58053"/>
    </ligand>
</feature>
<feature type="binding site" evidence="1">
    <location>
        <position position="510"/>
    </location>
    <ligand>
        <name>K(+)</name>
        <dbReference type="ChEBI" id="CHEBI:29103"/>
        <note>ligand shared between two tetrameric partners</note>
    </ligand>
</feature>
<feature type="binding site" evidence="1">
    <location>
        <position position="511"/>
    </location>
    <ligand>
        <name>K(+)</name>
        <dbReference type="ChEBI" id="CHEBI:29103"/>
        <note>ligand shared between two tetrameric partners</note>
    </ligand>
</feature>
<feature type="sequence conflict" description="In Ref. 2; BAA13769." evidence="3" ref="2">
    <original>A</original>
    <variation>G</variation>
    <location>
        <position position="253"/>
    </location>
</feature>
<feature type="sequence conflict" description="In Ref. 2; BAA13769." evidence="3" ref="2">
    <original>R</original>
    <variation>P</variation>
    <location>
        <position position="263"/>
    </location>
</feature>
<feature type="sequence conflict" description="In Ref. 3; CAB97003." evidence="3" ref="3">
    <original>IR</original>
    <variation>TRK</variation>
    <location>
        <begin position="508"/>
        <end position="509"/>
    </location>
</feature>
<dbReference type="EC" id="1.1.1.205" evidence="1"/>
<dbReference type="EMBL" id="CU329671">
    <property type="protein sequence ID" value="CAB10161.1"/>
    <property type="molecule type" value="Genomic_DNA"/>
</dbReference>
<dbReference type="EMBL" id="D89106">
    <property type="protein sequence ID" value="BAA13769.1"/>
    <property type="molecule type" value="mRNA"/>
</dbReference>
<dbReference type="EMBL" id="AJ293460">
    <property type="protein sequence ID" value="CAB97003.1"/>
    <property type="molecule type" value="Genomic_DNA"/>
</dbReference>
<dbReference type="PIR" id="T40127">
    <property type="entry name" value="T40127"/>
</dbReference>
<dbReference type="RefSeq" id="NP_595702.1">
    <property type="nucleotide sequence ID" value="NM_001021599.2"/>
</dbReference>
<dbReference type="SMR" id="O14344"/>
<dbReference type="BioGRID" id="276845">
    <property type="interactions" value="7"/>
</dbReference>
<dbReference type="FunCoup" id="O14344">
    <property type="interactions" value="429"/>
</dbReference>
<dbReference type="STRING" id="284812.O14344"/>
<dbReference type="iPTMnet" id="O14344"/>
<dbReference type="PaxDb" id="4896-SPBC2F12.14c.1"/>
<dbReference type="EnsemblFungi" id="SPBC2F12.14c.1">
    <property type="protein sequence ID" value="SPBC2F12.14c.1:pep"/>
    <property type="gene ID" value="SPBC2F12.14c"/>
</dbReference>
<dbReference type="GeneID" id="2540315"/>
<dbReference type="KEGG" id="spo:2540315"/>
<dbReference type="PomBase" id="SPBC2F12.14c">
    <property type="gene designation" value="gua1"/>
</dbReference>
<dbReference type="VEuPathDB" id="FungiDB:SPBC2F12.14c"/>
<dbReference type="eggNOG" id="KOG2550">
    <property type="taxonomic scope" value="Eukaryota"/>
</dbReference>
<dbReference type="HOGENOM" id="CLU_022552_2_1_1"/>
<dbReference type="InParanoid" id="O14344"/>
<dbReference type="OMA" id="MGYCGAK"/>
<dbReference type="PhylomeDB" id="O14344"/>
<dbReference type="Reactome" id="R-SPO-6798695">
    <property type="pathway name" value="Neutrophil degranulation"/>
</dbReference>
<dbReference type="Reactome" id="R-SPO-73817">
    <property type="pathway name" value="Purine ribonucleoside monophosphate biosynthesis"/>
</dbReference>
<dbReference type="Reactome" id="R-SPO-9748787">
    <property type="pathway name" value="Azathioprine ADME"/>
</dbReference>
<dbReference type="UniPathway" id="UPA00601">
    <property type="reaction ID" value="UER00295"/>
</dbReference>
<dbReference type="PRO" id="PR:O14344"/>
<dbReference type="Proteomes" id="UP000002485">
    <property type="component" value="Chromosome II"/>
</dbReference>
<dbReference type="GO" id="GO:0005737">
    <property type="term" value="C:cytoplasm"/>
    <property type="evidence" value="ECO:0000318"/>
    <property type="project" value="GO_Central"/>
</dbReference>
<dbReference type="GO" id="GO:0005829">
    <property type="term" value="C:cytosol"/>
    <property type="evidence" value="ECO:0007005"/>
    <property type="project" value="PomBase"/>
</dbReference>
<dbReference type="GO" id="GO:0003938">
    <property type="term" value="F:IMP dehydrogenase activity"/>
    <property type="evidence" value="ECO:0000314"/>
    <property type="project" value="PomBase"/>
</dbReference>
<dbReference type="GO" id="GO:0046872">
    <property type="term" value="F:metal ion binding"/>
    <property type="evidence" value="ECO:0007669"/>
    <property type="project" value="UniProtKB-UniRule"/>
</dbReference>
<dbReference type="GO" id="GO:0000166">
    <property type="term" value="F:nucleotide binding"/>
    <property type="evidence" value="ECO:0007669"/>
    <property type="project" value="UniProtKB-UniRule"/>
</dbReference>
<dbReference type="GO" id="GO:0006177">
    <property type="term" value="P:GMP biosynthetic process"/>
    <property type="evidence" value="ECO:0007669"/>
    <property type="project" value="UniProtKB-UniRule"/>
</dbReference>
<dbReference type="GO" id="GO:0006183">
    <property type="term" value="P:GTP biosynthetic process"/>
    <property type="evidence" value="ECO:0000269"/>
    <property type="project" value="PomBase"/>
</dbReference>
<dbReference type="CDD" id="cd04601">
    <property type="entry name" value="CBS_pair_IMPDH"/>
    <property type="match status" value="1"/>
</dbReference>
<dbReference type="CDD" id="cd00381">
    <property type="entry name" value="IMPDH"/>
    <property type="match status" value="1"/>
</dbReference>
<dbReference type="FunFam" id="3.20.20.70:FF:000007">
    <property type="entry name" value="Chromosome 19 SCAF14664, whole genome shotgun sequence"/>
    <property type="match status" value="1"/>
</dbReference>
<dbReference type="Gene3D" id="3.20.20.70">
    <property type="entry name" value="Aldolase class I"/>
    <property type="match status" value="1"/>
</dbReference>
<dbReference type="HAMAP" id="MF_01964">
    <property type="entry name" value="IMPDH"/>
    <property type="match status" value="1"/>
</dbReference>
<dbReference type="InterPro" id="IPR013785">
    <property type="entry name" value="Aldolase_TIM"/>
</dbReference>
<dbReference type="InterPro" id="IPR000644">
    <property type="entry name" value="CBS_dom"/>
</dbReference>
<dbReference type="InterPro" id="IPR046342">
    <property type="entry name" value="CBS_dom_sf"/>
</dbReference>
<dbReference type="InterPro" id="IPR005990">
    <property type="entry name" value="IMP_DH"/>
</dbReference>
<dbReference type="InterPro" id="IPR015875">
    <property type="entry name" value="IMP_DH/GMP_Rdtase_CS"/>
</dbReference>
<dbReference type="InterPro" id="IPR001093">
    <property type="entry name" value="IMP_DH_GMPRt"/>
</dbReference>
<dbReference type="NCBIfam" id="TIGR01302">
    <property type="entry name" value="IMP_dehydrog"/>
    <property type="match status" value="1"/>
</dbReference>
<dbReference type="PANTHER" id="PTHR11911:SF111">
    <property type="entry name" value="INOSINE-5'-MONOPHOSPHATE DEHYDROGENASE"/>
    <property type="match status" value="1"/>
</dbReference>
<dbReference type="PANTHER" id="PTHR11911">
    <property type="entry name" value="INOSINE-5-MONOPHOSPHATE DEHYDROGENASE RELATED"/>
    <property type="match status" value="1"/>
</dbReference>
<dbReference type="Pfam" id="PF00571">
    <property type="entry name" value="CBS"/>
    <property type="match status" value="2"/>
</dbReference>
<dbReference type="Pfam" id="PF00478">
    <property type="entry name" value="IMPDH"/>
    <property type="match status" value="1"/>
</dbReference>
<dbReference type="PIRSF" id="PIRSF000130">
    <property type="entry name" value="IMPDH"/>
    <property type="match status" value="1"/>
</dbReference>
<dbReference type="SMART" id="SM00116">
    <property type="entry name" value="CBS"/>
    <property type="match status" value="2"/>
</dbReference>
<dbReference type="SMART" id="SM01240">
    <property type="entry name" value="IMPDH"/>
    <property type="match status" value="1"/>
</dbReference>
<dbReference type="SUPFAM" id="SSF54631">
    <property type="entry name" value="CBS-domain pair"/>
    <property type="match status" value="1"/>
</dbReference>
<dbReference type="SUPFAM" id="SSF51412">
    <property type="entry name" value="Inosine monophosphate dehydrogenase (IMPDH)"/>
    <property type="match status" value="1"/>
</dbReference>
<dbReference type="PROSITE" id="PS51371">
    <property type="entry name" value="CBS"/>
    <property type="match status" value="2"/>
</dbReference>
<dbReference type="PROSITE" id="PS00487">
    <property type="entry name" value="IMP_DH_GMP_RED"/>
    <property type="match status" value="1"/>
</dbReference>
<sequence>MSAFKPYTEALEVLKKYEKKDGLSIDDLIRHNFQGGLTFNDFLILPGYIDFVPNNVSLETRISRNIVLKTPFMSSPMDTVTEDQMAIYMALLGGIGVIHHNCTPEEQAAMVRKVKKYENGFILDPVVFSPQHTVGDVLKIKETKGFSGIPITENGKLRGKLVGIVTSRDVQFHKDTNTPVTEVMTPREELITTAEGISLERANEMLRKSKKGKLPVVDKDDNLVALLSLTDLMKNLHFPLASKTSDTKQLMVAAAIGTRDDDRTRLALLAEAGLDAVVIDSSQGNSCFQIEMIKWIKKTYPKIDVIAGNVVTREQTASLIAAGADGLRVGMGSGSACITQEVMACGRPQATAIAQVAEFASQFGIGVIADGGIQNVGHMVKSLSLGATAVMMGGLLAGTTESPGEYYVREGQRYKSYRGMGSIAAMEGTGVNKNASTGRYFSENDAVRVAQGVSGLVVDKGSLLRFLPYLYTGLQHALQDIGTKSLDELHEAVDKHEVRFELRSSAAIREGDIQGFATYEKRLY</sequence>